<accession>Q8NXD0</accession>
<feature type="chain" id="PRO_0000278697" description="ClpXP adapter protein SpxH">
    <location>
        <begin position="1"/>
        <end position="268"/>
    </location>
</feature>
<evidence type="ECO:0000255" key="1">
    <source>
        <dbReference type="HAMAP-Rule" id="MF_02245"/>
    </source>
</evidence>
<reference key="1">
    <citation type="journal article" date="2002" name="Lancet">
        <title>Genome and virulence determinants of high virulence community-acquired MRSA.</title>
        <authorList>
            <person name="Baba T."/>
            <person name="Takeuchi F."/>
            <person name="Kuroda M."/>
            <person name="Yuzawa H."/>
            <person name="Aoki K."/>
            <person name="Oguchi A."/>
            <person name="Nagai Y."/>
            <person name="Iwama N."/>
            <person name="Asano K."/>
            <person name="Naimi T."/>
            <person name="Kuroda H."/>
            <person name="Cui L."/>
            <person name="Yamamoto K."/>
            <person name="Hiramatsu K."/>
        </authorList>
    </citation>
    <scope>NUCLEOTIDE SEQUENCE [LARGE SCALE GENOMIC DNA]</scope>
    <source>
        <strain>MW2</strain>
    </source>
</reference>
<sequence>MAGELRIMENKSREDINLSPVSKIEIYSFFDPFSSDCFKLSAILSKLRIEYNQYIRIRHILNPSLKVLTKCQAQSTSNFDNIALAYKAAELQGRVRAERFIHLMQNEIIPKRDIITESMICDCIQNAGIDLEVFKDDLQKSKLTESLKIDLHIAREMEIEQAPSLVFFSEDVHEEGLKVEGLYPYHIYTYIINELMGKPIEKNLPPKLETYIQQQQLVTMEELLTIYEWPEKLLNKELKKLAIQQKIEKLKYPDGDFWKSKMPKIKSK</sequence>
<dbReference type="EMBL" id="BA000033">
    <property type="protein sequence ID" value="BAB94748.1"/>
    <property type="molecule type" value="Genomic_DNA"/>
</dbReference>
<dbReference type="SMR" id="Q8NXD0"/>
<dbReference type="KEGG" id="sam:MW0883"/>
<dbReference type="HOGENOM" id="CLU_069785_0_0_9"/>
<dbReference type="GO" id="GO:0005737">
    <property type="term" value="C:cytoplasm"/>
    <property type="evidence" value="ECO:0007669"/>
    <property type="project" value="UniProtKB-SubCell"/>
</dbReference>
<dbReference type="Gene3D" id="3.40.30.10">
    <property type="entry name" value="Glutaredoxin"/>
    <property type="match status" value="1"/>
</dbReference>
<dbReference type="HAMAP" id="MF_02245">
    <property type="entry name" value="Adapter_SpxH"/>
    <property type="match status" value="1"/>
</dbReference>
<dbReference type="InterPro" id="IPR046404">
    <property type="entry name" value="Adapter_SpxH"/>
</dbReference>
<dbReference type="InterPro" id="IPR036249">
    <property type="entry name" value="Thioredoxin-like_sf"/>
</dbReference>
<dbReference type="PANTHER" id="PTHR13887:SF47">
    <property type="entry name" value="CLPXP ADAPTER PROTEIN SPXH"/>
    <property type="match status" value="1"/>
</dbReference>
<dbReference type="PANTHER" id="PTHR13887">
    <property type="entry name" value="GLUTATHIONE S-TRANSFERASE KAPPA"/>
    <property type="match status" value="1"/>
</dbReference>
<dbReference type="Pfam" id="PF13743">
    <property type="entry name" value="Thioredoxin_5"/>
    <property type="match status" value="1"/>
</dbReference>
<dbReference type="SUPFAM" id="SSF52833">
    <property type="entry name" value="Thioredoxin-like"/>
    <property type="match status" value="1"/>
</dbReference>
<organism>
    <name type="scientific">Staphylococcus aureus (strain MW2)</name>
    <dbReference type="NCBI Taxonomy" id="196620"/>
    <lineage>
        <taxon>Bacteria</taxon>
        <taxon>Bacillati</taxon>
        <taxon>Bacillota</taxon>
        <taxon>Bacilli</taxon>
        <taxon>Bacillales</taxon>
        <taxon>Staphylococcaceae</taxon>
        <taxon>Staphylococcus</taxon>
    </lineage>
</organism>
<name>SPXH_STAAW</name>
<comment type="function">
    <text evidence="1">Adapter protein required for efficient degradation of Spx by ClpXP under non-stress conditions. Interaction with Spx stabilizes Spx and exposes the C-terminus of Spx for recognition and proteolysis by ClpXP.</text>
</comment>
<comment type="subunit">
    <text evidence="1">Interacts with Spx.</text>
</comment>
<comment type="subcellular location">
    <subcellularLocation>
        <location evidence="1">Cytoplasm</location>
    </subcellularLocation>
</comment>
<comment type="similarity">
    <text evidence="1">Belongs to the SpxH family.</text>
</comment>
<proteinExistence type="inferred from homology"/>
<gene>
    <name evidence="1" type="primary">spxH</name>
    <name type="ordered locus">MW0883</name>
</gene>
<keyword id="KW-0963">Cytoplasm</keyword>
<protein>
    <recommendedName>
        <fullName evidence="1">ClpXP adapter protein SpxH</fullName>
    </recommendedName>
</protein>